<organism>
    <name type="scientific">Mesorhizobium japonicum (strain LMG 29417 / CECT 9101 / MAFF 303099)</name>
    <name type="common">Mesorhizobium loti (strain MAFF 303099)</name>
    <dbReference type="NCBI Taxonomy" id="266835"/>
    <lineage>
        <taxon>Bacteria</taxon>
        <taxon>Pseudomonadati</taxon>
        <taxon>Pseudomonadota</taxon>
        <taxon>Alphaproteobacteria</taxon>
        <taxon>Hyphomicrobiales</taxon>
        <taxon>Phyllobacteriaceae</taxon>
        <taxon>Mesorhizobium</taxon>
    </lineage>
</organism>
<dbReference type="EC" id="6.1.1.11" evidence="1"/>
<dbReference type="EMBL" id="BA000012">
    <property type="protein sequence ID" value="BAB48535.1"/>
    <property type="molecule type" value="Genomic_DNA"/>
</dbReference>
<dbReference type="RefSeq" id="WP_010909889.1">
    <property type="nucleotide sequence ID" value="NC_002678.2"/>
</dbReference>
<dbReference type="SMR" id="Q98LC8"/>
<dbReference type="KEGG" id="mlo:mll1081"/>
<dbReference type="PATRIC" id="fig|266835.9.peg.873"/>
<dbReference type="eggNOG" id="COG0172">
    <property type="taxonomic scope" value="Bacteria"/>
</dbReference>
<dbReference type="HOGENOM" id="CLU_023797_1_1_5"/>
<dbReference type="UniPathway" id="UPA00906">
    <property type="reaction ID" value="UER00895"/>
</dbReference>
<dbReference type="Proteomes" id="UP000000552">
    <property type="component" value="Chromosome"/>
</dbReference>
<dbReference type="GO" id="GO:0005737">
    <property type="term" value="C:cytoplasm"/>
    <property type="evidence" value="ECO:0007669"/>
    <property type="project" value="UniProtKB-SubCell"/>
</dbReference>
<dbReference type="GO" id="GO:0005524">
    <property type="term" value="F:ATP binding"/>
    <property type="evidence" value="ECO:0007669"/>
    <property type="project" value="UniProtKB-UniRule"/>
</dbReference>
<dbReference type="GO" id="GO:0004828">
    <property type="term" value="F:serine-tRNA ligase activity"/>
    <property type="evidence" value="ECO:0007669"/>
    <property type="project" value="UniProtKB-UniRule"/>
</dbReference>
<dbReference type="GO" id="GO:0016260">
    <property type="term" value="P:selenocysteine biosynthetic process"/>
    <property type="evidence" value="ECO:0007669"/>
    <property type="project" value="UniProtKB-UniRule"/>
</dbReference>
<dbReference type="GO" id="GO:0006434">
    <property type="term" value="P:seryl-tRNA aminoacylation"/>
    <property type="evidence" value="ECO:0007669"/>
    <property type="project" value="UniProtKB-UniRule"/>
</dbReference>
<dbReference type="CDD" id="cd00770">
    <property type="entry name" value="SerRS_core"/>
    <property type="match status" value="1"/>
</dbReference>
<dbReference type="Gene3D" id="3.30.930.10">
    <property type="entry name" value="Bira Bifunctional Protein, Domain 2"/>
    <property type="match status" value="1"/>
</dbReference>
<dbReference type="Gene3D" id="1.10.287.40">
    <property type="entry name" value="Serine-tRNA synthetase, tRNA binding domain"/>
    <property type="match status" value="1"/>
</dbReference>
<dbReference type="HAMAP" id="MF_00176">
    <property type="entry name" value="Ser_tRNA_synth_type1"/>
    <property type="match status" value="1"/>
</dbReference>
<dbReference type="InterPro" id="IPR002314">
    <property type="entry name" value="aa-tRNA-synt_IIb"/>
</dbReference>
<dbReference type="InterPro" id="IPR006195">
    <property type="entry name" value="aa-tRNA-synth_II"/>
</dbReference>
<dbReference type="InterPro" id="IPR045864">
    <property type="entry name" value="aa-tRNA-synth_II/BPL/LPL"/>
</dbReference>
<dbReference type="InterPro" id="IPR002317">
    <property type="entry name" value="Ser-tRNA-ligase_type_1"/>
</dbReference>
<dbReference type="InterPro" id="IPR015866">
    <property type="entry name" value="Ser-tRNA-synth_1_N"/>
</dbReference>
<dbReference type="InterPro" id="IPR042103">
    <property type="entry name" value="SerRS_1_N_sf"/>
</dbReference>
<dbReference type="InterPro" id="IPR033729">
    <property type="entry name" value="SerRS_core"/>
</dbReference>
<dbReference type="InterPro" id="IPR010978">
    <property type="entry name" value="tRNA-bd_arm"/>
</dbReference>
<dbReference type="NCBIfam" id="TIGR00414">
    <property type="entry name" value="serS"/>
    <property type="match status" value="1"/>
</dbReference>
<dbReference type="PANTHER" id="PTHR43697:SF1">
    <property type="entry name" value="SERINE--TRNA LIGASE"/>
    <property type="match status" value="1"/>
</dbReference>
<dbReference type="PANTHER" id="PTHR43697">
    <property type="entry name" value="SERYL-TRNA SYNTHETASE"/>
    <property type="match status" value="1"/>
</dbReference>
<dbReference type="Pfam" id="PF02403">
    <property type="entry name" value="Seryl_tRNA_N"/>
    <property type="match status" value="1"/>
</dbReference>
<dbReference type="Pfam" id="PF00587">
    <property type="entry name" value="tRNA-synt_2b"/>
    <property type="match status" value="1"/>
</dbReference>
<dbReference type="PIRSF" id="PIRSF001529">
    <property type="entry name" value="Ser-tRNA-synth_IIa"/>
    <property type="match status" value="1"/>
</dbReference>
<dbReference type="PRINTS" id="PR00981">
    <property type="entry name" value="TRNASYNTHSER"/>
</dbReference>
<dbReference type="SUPFAM" id="SSF55681">
    <property type="entry name" value="Class II aaRS and biotin synthetases"/>
    <property type="match status" value="1"/>
</dbReference>
<dbReference type="SUPFAM" id="SSF46589">
    <property type="entry name" value="tRNA-binding arm"/>
    <property type="match status" value="1"/>
</dbReference>
<dbReference type="PROSITE" id="PS50862">
    <property type="entry name" value="AA_TRNA_LIGASE_II"/>
    <property type="match status" value="1"/>
</dbReference>
<name>SYS_RHILO</name>
<reference key="1">
    <citation type="journal article" date="2000" name="DNA Res.">
        <title>Complete genome structure of the nitrogen-fixing symbiotic bacterium Mesorhizobium loti.</title>
        <authorList>
            <person name="Kaneko T."/>
            <person name="Nakamura Y."/>
            <person name="Sato S."/>
            <person name="Asamizu E."/>
            <person name="Kato T."/>
            <person name="Sasamoto S."/>
            <person name="Watanabe A."/>
            <person name="Idesawa K."/>
            <person name="Ishikawa A."/>
            <person name="Kawashima K."/>
            <person name="Kimura T."/>
            <person name="Kishida Y."/>
            <person name="Kiyokawa C."/>
            <person name="Kohara M."/>
            <person name="Matsumoto M."/>
            <person name="Matsuno A."/>
            <person name="Mochizuki Y."/>
            <person name="Nakayama S."/>
            <person name="Nakazaki N."/>
            <person name="Shimpo S."/>
            <person name="Sugimoto M."/>
            <person name="Takeuchi C."/>
            <person name="Yamada M."/>
            <person name="Tabata S."/>
        </authorList>
    </citation>
    <scope>NUCLEOTIDE SEQUENCE [LARGE SCALE GENOMIC DNA]</scope>
    <source>
        <strain>LMG 29417 / CECT 9101 / MAFF 303099</strain>
    </source>
</reference>
<comment type="function">
    <text evidence="1">Catalyzes the attachment of serine to tRNA(Ser). Is also able to aminoacylate tRNA(Sec) with serine, to form the misacylated tRNA L-seryl-tRNA(Sec), which will be further converted into selenocysteinyl-tRNA(Sec).</text>
</comment>
<comment type="catalytic activity">
    <reaction evidence="1">
        <text>tRNA(Ser) + L-serine + ATP = L-seryl-tRNA(Ser) + AMP + diphosphate + H(+)</text>
        <dbReference type="Rhea" id="RHEA:12292"/>
        <dbReference type="Rhea" id="RHEA-COMP:9669"/>
        <dbReference type="Rhea" id="RHEA-COMP:9703"/>
        <dbReference type="ChEBI" id="CHEBI:15378"/>
        <dbReference type="ChEBI" id="CHEBI:30616"/>
        <dbReference type="ChEBI" id="CHEBI:33019"/>
        <dbReference type="ChEBI" id="CHEBI:33384"/>
        <dbReference type="ChEBI" id="CHEBI:78442"/>
        <dbReference type="ChEBI" id="CHEBI:78533"/>
        <dbReference type="ChEBI" id="CHEBI:456215"/>
        <dbReference type="EC" id="6.1.1.11"/>
    </reaction>
</comment>
<comment type="catalytic activity">
    <reaction evidence="1">
        <text>tRNA(Sec) + L-serine + ATP = L-seryl-tRNA(Sec) + AMP + diphosphate + H(+)</text>
        <dbReference type="Rhea" id="RHEA:42580"/>
        <dbReference type="Rhea" id="RHEA-COMP:9742"/>
        <dbReference type="Rhea" id="RHEA-COMP:10128"/>
        <dbReference type="ChEBI" id="CHEBI:15378"/>
        <dbReference type="ChEBI" id="CHEBI:30616"/>
        <dbReference type="ChEBI" id="CHEBI:33019"/>
        <dbReference type="ChEBI" id="CHEBI:33384"/>
        <dbReference type="ChEBI" id="CHEBI:78442"/>
        <dbReference type="ChEBI" id="CHEBI:78533"/>
        <dbReference type="ChEBI" id="CHEBI:456215"/>
        <dbReference type="EC" id="6.1.1.11"/>
    </reaction>
</comment>
<comment type="pathway">
    <text evidence="1">Aminoacyl-tRNA biosynthesis; selenocysteinyl-tRNA(Sec) biosynthesis; L-seryl-tRNA(Sec) from L-serine and tRNA(Sec): step 1/1.</text>
</comment>
<comment type="subunit">
    <text evidence="1">Homodimer. The tRNA molecule binds across the dimer.</text>
</comment>
<comment type="subcellular location">
    <subcellularLocation>
        <location evidence="1">Cytoplasm</location>
    </subcellularLocation>
</comment>
<comment type="domain">
    <text evidence="1">Consists of two distinct domains, a catalytic core and a N-terminal extension that is involved in tRNA binding.</text>
</comment>
<comment type="similarity">
    <text evidence="1">Belongs to the class-II aminoacyl-tRNA synthetase family. Type-1 seryl-tRNA synthetase subfamily.</text>
</comment>
<accession>Q98LC8</accession>
<proteinExistence type="inferred from homology"/>
<evidence type="ECO:0000255" key="1">
    <source>
        <dbReference type="HAMAP-Rule" id="MF_00176"/>
    </source>
</evidence>
<gene>
    <name evidence="1" type="primary">serS</name>
    <name type="ordered locus">mll1081</name>
</gene>
<protein>
    <recommendedName>
        <fullName evidence="1">Serine--tRNA ligase</fullName>
        <ecNumber evidence="1">6.1.1.11</ecNumber>
    </recommendedName>
    <alternativeName>
        <fullName evidence="1">Seryl-tRNA synthetase</fullName>
        <shortName evidence="1">SerRS</shortName>
    </alternativeName>
    <alternativeName>
        <fullName evidence="1">Seryl-tRNA(Ser/Sec) synthetase</fullName>
    </alternativeName>
</protein>
<feature type="chain" id="PRO_0000122105" description="Serine--tRNA ligase">
    <location>
        <begin position="1"/>
        <end position="434"/>
    </location>
</feature>
<feature type="binding site" evidence="1">
    <location>
        <begin position="239"/>
        <end position="241"/>
    </location>
    <ligand>
        <name>L-serine</name>
        <dbReference type="ChEBI" id="CHEBI:33384"/>
    </ligand>
</feature>
<feature type="binding site" evidence="1">
    <location>
        <begin position="270"/>
        <end position="272"/>
    </location>
    <ligand>
        <name>ATP</name>
        <dbReference type="ChEBI" id="CHEBI:30616"/>
    </ligand>
</feature>
<feature type="binding site" evidence="1">
    <location>
        <position position="293"/>
    </location>
    <ligand>
        <name>L-serine</name>
        <dbReference type="ChEBI" id="CHEBI:33384"/>
    </ligand>
</feature>
<feature type="binding site" evidence="1">
    <location>
        <begin position="357"/>
        <end position="360"/>
    </location>
    <ligand>
        <name>ATP</name>
        <dbReference type="ChEBI" id="CHEBI:30616"/>
    </ligand>
</feature>
<feature type="binding site" evidence="1">
    <location>
        <position position="393"/>
    </location>
    <ligand>
        <name>L-serine</name>
        <dbReference type="ChEBI" id="CHEBI:33384"/>
    </ligand>
</feature>
<sequence length="434" mass="48549">MLDIKWIRDNPKALVEALAKRSWSAGEAQSTVDDLIARDEARREHVTELQTKQERRNAASKEIGNAMRSGDAALAEKLKAEVGDIKTFIQNGEARERELDKALTDALAVLPNVPLDDVPVGKDEHDNVVKHIVGKVPTRSNWVKEHFEIGEALGMMDFERAAKLSGSRFTVLKSGLARMERAIGQFMLDLHTTEHGYEEVIPPLMVRDEVLFGTNQLPKFEEDLFFTPHGEGRLGLIPTAEVPLTNLVREEITAHEKLPLRFTALTPCFRSEAGSAGRDTRGMLRQHQFYKVELVSITDQDSSLAEHERMTQCAEEVLKRLELPFRTMVLCTGDMGFGARKTYDIEVWLPGQNAYREISSCSVCGDFQARRMDARYKDKDGKGNRFVHTLNGSGTAVGRALIAVIENYQNEDGSVTIPEVLRPYMGGLAKIEAK</sequence>
<keyword id="KW-0030">Aminoacyl-tRNA synthetase</keyword>
<keyword id="KW-0067">ATP-binding</keyword>
<keyword id="KW-0963">Cytoplasm</keyword>
<keyword id="KW-0436">Ligase</keyword>
<keyword id="KW-0547">Nucleotide-binding</keyword>
<keyword id="KW-0648">Protein biosynthesis</keyword>